<keyword id="KW-0002">3D-structure</keyword>
<keyword id="KW-0687">Ribonucleoprotein</keyword>
<keyword id="KW-0689">Ribosomal protein</keyword>
<keyword id="KW-0694">RNA-binding</keyword>
<keyword id="KW-0699">rRNA-binding</keyword>
<evidence type="ECO:0000255" key="1">
    <source>
        <dbReference type="HAMAP-Rule" id="MF_00403"/>
    </source>
</evidence>
<evidence type="ECO:0000305" key="2"/>
<evidence type="ECO:0007829" key="3">
    <source>
        <dbReference type="PDB" id="6SWD"/>
    </source>
</evidence>
<evidence type="ECO:0007829" key="4">
    <source>
        <dbReference type="PDB" id="7ZHG"/>
    </source>
</evidence>
<feature type="chain" id="PRO_0000146376" description="Small ribosomal subunit protein uS12">
    <location>
        <begin position="1"/>
        <end position="147"/>
    </location>
</feature>
<feature type="strand" evidence="3">
    <location>
        <begin position="9"/>
        <end position="11"/>
    </location>
</feature>
<feature type="helix" evidence="4">
    <location>
        <begin position="13"/>
        <end position="24"/>
    </location>
</feature>
<feature type="helix" evidence="4">
    <location>
        <begin position="28"/>
        <end position="35"/>
    </location>
</feature>
<feature type="helix" evidence="4">
    <location>
        <begin position="37"/>
        <end position="41"/>
    </location>
</feature>
<feature type="turn" evidence="4">
    <location>
        <begin position="43"/>
        <end position="46"/>
    </location>
</feature>
<feature type="strand" evidence="4">
    <location>
        <begin position="48"/>
        <end position="61"/>
    </location>
</feature>
<feature type="strand" evidence="4">
    <location>
        <begin position="69"/>
        <end position="77"/>
    </location>
</feature>
<feature type="turn" evidence="4">
    <location>
        <begin position="78"/>
        <end position="80"/>
    </location>
</feature>
<feature type="strand" evidence="4">
    <location>
        <begin position="83"/>
        <end position="87"/>
    </location>
</feature>
<feature type="helix" evidence="4">
    <location>
        <begin position="93"/>
        <end position="96"/>
    </location>
</feature>
<feature type="strand" evidence="4">
    <location>
        <begin position="102"/>
        <end position="107"/>
    </location>
</feature>
<feature type="helix" evidence="4">
    <location>
        <begin position="111"/>
        <end position="113"/>
    </location>
</feature>
<feature type="strand" evidence="4">
    <location>
        <begin position="124"/>
        <end position="129"/>
    </location>
</feature>
<feature type="helix" evidence="4">
    <location>
        <begin position="134"/>
        <end position="139"/>
    </location>
</feature>
<feature type="strand" evidence="4">
    <location>
        <begin position="140"/>
        <end position="142"/>
    </location>
</feature>
<sequence>MPGKKAPNGEFAGRKLKLKRKKFRWSDIRYKRRVLRLKEKSDPLEGAPQARGIVLEKIAVEAKQPNSGMRKAVRVQLIKNGKVVTAFCPGDGAIKFIDEHDEVIIEGIGGPKGGSMGDIPGIRYKVVKVNRVSLKELVKGRKEKPRR</sequence>
<proteinExistence type="evidence at protein level"/>
<accession>P61994</accession>
<accession>G8ZJ84</accession>
<accession>Q9V110</accession>
<name>RS12_PYRAB</name>
<protein>
    <recommendedName>
        <fullName evidence="1">Small ribosomal subunit protein uS12</fullName>
    </recommendedName>
    <alternativeName>
        <fullName evidence="2">30S ribosomal protein S12</fullName>
    </alternativeName>
</protein>
<dbReference type="EMBL" id="AJ248284">
    <property type="protein sequence ID" value="CAB49541.1"/>
    <property type="molecule type" value="Genomic_DNA"/>
</dbReference>
<dbReference type="EMBL" id="HE613800">
    <property type="protein sequence ID" value="CCE70011.1"/>
    <property type="molecule type" value="Genomic_DNA"/>
</dbReference>
<dbReference type="PIR" id="F75182">
    <property type="entry name" value="F75182"/>
</dbReference>
<dbReference type="RefSeq" id="WP_010867743.1">
    <property type="nucleotide sequence ID" value="NC_000868.1"/>
</dbReference>
<dbReference type="PDB" id="5JB3">
    <property type="method" value="EM"/>
    <property type="resolution" value="5.34 A"/>
    <property type="chains" value="N=1-147"/>
</dbReference>
<dbReference type="PDB" id="5JBH">
    <property type="method" value="EM"/>
    <property type="resolution" value="5.34 A"/>
    <property type="chains" value="N=1-147"/>
</dbReference>
<dbReference type="PDB" id="6SW9">
    <property type="method" value="EM"/>
    <property type="resolution" value="4.20 A"/>
    <property type="chains" value="N=1-147"/>
</dbReference>
<dbReference type="PDB" id="6SWC">
    <property type="method" value="EM"/>
    <property type="resolution" value="3.30 A"/>
    <property type="chains" value="N=1-147"/>
</dbReference>
<dbReference type="PDB" id="6SWD">
    <property type="method" value="EM"/>
    <property type="resolution" value="3.20 A"/>
    <property type="chains" value="N=1-147"/>
</dbReference>
<dbReference type="PDB" id="7ZAG">
    <property type="method" value="EM"/>
    <property type="resolution" value="2.77 A"/>
    <property type="chains" value="N=1-147"/>
</dbReference>
<dbReference type="PDB" id="7ZAH">
    <property type="method" value="EM"/>
    <property type="resolution" value="2.70 A"/>
    <property type="chains" value="N=1-147"/>
</dbReference>
<dbReference type="PDB" id="7ZAI">
    <property type="method" value="EM"/>
    <property type="resolution" value="2.60 A"/>
    <property type="chains" value="N=1-147"/>
</dbReference>
<dbReference type="PDB" id="7ZHG">
    <property type="method" value="EM"/>
    <property type="resolution" value="2.25 A"/>
    <property type="chains" value="N=1-147"/>
</dbReference>
<dbReference type="PDBsum" id="5JB3"/>
<dbReference type="PDBsum" id="5JBH"/>
<dbReference type="PDBsum" id="6SW9"/>
<dbReference type="PDBsum" id="6SWC"/>
<dbReference type="PDBsum" id="6SWD"/>
<dbReference type="PDBsum" id="7ZAG"/>
<dbReference type="PDBsum" id="7ZAH"/>
<dbReference type="PDBsum" id="7ZAI"/>
<dbReference type="PDBsum" id="7ZHG"/>
<dbReference type="EMDB" id="EMD-10320"/>
<dbReference type="EMDB" id="EMD-10322"/>
<dbReference type="EMDB" id="EMD-10323"/>
<dbReference type="EMDB" id="EMD-14579"/>
<dbReference type="EMDB" id="EMD-14580"/>
<dbReference type="EMDB" id="EMD-14581"/>
<dbReference type="EMDB" id="EMD-14731"/>
<dbReference type="EMDB" id="EMD-8148"/>
<dbReference type="EMDB" id="EMD-8149"/>
<dbReference type="SMR" id="P61994"/>
<dbReference type="STRING" id="272844.PAB0427"/>
<dbReference type="KEGG" id="pab:PAB0427"/>
<dbReference type="PATRIC" id="fig|272844.11.peg.657"/>
<dbReference type="eggNOG" id="arCOG04255">
    <property type="taxonomic scope" value="Archaea"/>
</dbReference>
<dbReference type="HOGENOM" id="CLU_115574_0_1_2"/>
<dbReference type="OrthoDB" id="45154at2157"/>
<dbReference type="PhylomeDB" id="P61994"/>
<dbReference type="Proteomes" id="UP000000810">
    <property type="component" value="Chromosome"/>
</dbReference>
<dbReference type="Proteomes" id="UP000009139">
    <property type="component" value="Chromosome"/>
</dbReference>
<dbReference type="GO" id="GO:0015935">
    <property type="term" value="C:small ribosomal subunit"/>
    <property type="evidence" value="ECO:0007669"/>
    <property type="project" value="InterPro"/>
</dbReference>
<dbReference type="GO" id="GO:0019843">
    <property type="term" value="F:rRNA binding"/>
    <property type="evidence" value="ECO:0007669"/>
    <property type="project" value="UniProtKB-UniRule"/>
</dbReference>
<dbReference type="GO" id="GO:0003735">
    <property type="term" value="F:structural constituent of ribosome"/>
    <property type="evidence" value="ECO:0007669"/>
    <property type="project" value="InterPro"/>
</dbReference>
<dbReference type="GO" id="GO:0006412">
    <property type="term" value="P:translation"/>
    <property type="evidence" value="ECO:0007669"/>
    <property type="project" value="UniProtKB-UniRule"/>
</dbReference>
<dbReference type="CDD" id="cd03367">
    <property type="entry name" value="Ribosomal_S23"/>
    <property type="match status" value="1"/>
</dbReference>
<dbReference type="FunFam" id="2.40.50.140:FF:000007">
    <property type="entry name" value="40S ribosomal protein S23"/>
    <property type="match status" value="1"/>
</dbReference>
<dbReference type="Gene3D" id="2.40.50.140">
    <property type="entry name" value="Nucleic acid-binding proteins"/>
    <property type="match status" value="1"/>
</dbReference>
<dbReference type="HAMAP" id="MF_00403_A">
    <property type="entry name" value="Ribosomal_uS12_A"/>
    <property type="match status" value="1"/>
</dbReference>
<dbReference type="InterPro" id="IPR012340">
    <property type="entry name" value="NA-bd_OB-fold"/>
</dbReference>
<dbReference type="InterPro" id="IPR006032">
    <property type="entry name" value="Ribosomal_uS12"/>
</dbReference>
<dbReference type="InterPro" id="IPR022863">
    <property type="entry name" value="Ribosomal_uS12_arc"/>
</dbReference>
<dbReference type="InterPro" id="IPR005680">
    <property type="entry name" value="Ribosomal_uS12_euk/arc"/>
</dbReference>
<dbReference type="NCBIfam" id="NF003254">
    <property type="entry name" value="PRK04211.1"/>
    <property type="match status" value="1"/>
</dbReference>
<dbReference type="NCBIfam" id="TIGR00982">
    <property type="entry name" value="uS12_E_A"/>
    <property type="match status" value="1"/>
</dbReference>
<dbReference type="PANTHER" id="PTHR11652">
    <property type="entry name" value="30S RIBOSOMAL PROTEIN S12 FAMILY MEMBER"/>
    <property type="match status" value="1"/>
</dbReference>
<dbReference type="Pfam" id="PF00164">
    <property type="entry name" value="Ribosom_S12_S23"/>
    <property type="match status" value="1"/>
</dbReference>
<dbReference type="PIRSF" id="PIRSF002133">
    <property type="entry name" value="Ribosomal_S12/S23"/>
    <property type="match status" value="1"/>
</dbReference>
<dbReference type="SUPFAM" id="SSF50249">
    <property type="entry name" value="Nucleic acid-binding proteins"/>
    <property type="match status" value="1"/>
</dbReference>
<gene>
    <name evidence="1" type="primary">rps12</name>
    <name type="ordered locus">PYRAB06190</name>
    <name type="ORF">PAB0427</name>
</gene>
<comment type="function">
    <text evidence="1">With S4 and S5 plays an important role in translational accuracy. Located at the interface of the 30S and 50S subunits.</text>
</comment>
<comment type="subunit">
    <text evidence="1">Part of the 30S ribosomal subunit.</text>
</comment>
<comment type="similarity">
    <text evidence="1">Belongs to the universal ribosomal protein uS12 family.</text>
</comment>
<organism>
    <name type="scientific">Pyrococcus abyssi (strain GE5 / Orsay)</name>
    <dbReference type="NCBI Taxonomy" id="272844"/>
    <lineage>
        <taxon>Archaea</taxon>
        <taxon>Methanobacteriati</taxon>
        <taxon>Methanobacteriota</taxon>
        <taxon>Thermococci</taxon>
        <taxon>Thermococcales</taxon>
        <taxon>Thermococcaceae</taxon>
        <taxon>Pyrococcus</taxon>
    </lineage>
</organism>
<reference key="1">
    <citation type="journal article" date="2003" name="Mol. Microbiol.">
        <title>An integrated analysis of the genome of the hyperthermophilic archaeon Pyrococcus abyssi.</title>
        <authorList>
            <person name="Cohen G.N."/>
            <person name="Barbe V."/>
            <person name="Flament D."/>
            <person name="Galperin M."/>
            <person name="Heilig R."/>
            <person name="Lecompte O."/>
            <person name="Poch O."/>
            <person name="Prieur D."/>
            <person name="Querellou J."/>
            <person name="Ripp R."/>
            <person name="Thierry J.-C."/>
            <person name="Van der Oost J."/>
            <person name="Weissenbach J."/>
            <person name="Zivanovic Y."/>
            <person name="Forterre P."/>
        </authorList>
    </citation>
    <scope>NUCLEOTIDE SEQUENCE [LARGE SCALE GENOMIC DNA]</scope>
    <source>
        <strain>GE5 / Orsay</strain>
    </source>
</reference>
<reference key="2">
    <citation type="journal article" date="2012" name="Curr. Microbiol.">
        <title>Re-annotation of two hyperthermophilic archaea Pyrococcus abyssi GE5 and Pyrococcus furiosus DSM 3638.</title>
        <authorList>
            <person name="Gao J."/>
            <person name="Wang J."/>
        </authorList>
    </citation>
    <scope>GENOME REANNOTATION</scope>
    <source>
        <strain>GE5 / Orsay</strain>
    </source>
</reference>